<name>IXTPA_PSEAE</name>
<dbReference type="EC" id="3.6.1.66" evidence="1"/>
<dbReference type="EMBL" id="AE004091">
    <property type="protein sequence ID" value="AAG03776.1"/>
    <property type="molecule type" value="Genomic_DNA"/>
</dbReference>
<dbReference type="PIR" id="B83597">
    <property type="entry name" value="B83597"/>
</dbReference>
<dbReference type="RefSeq" id="NP_249078.1">
    <property type="nucleotide sequence ID" value="NC_002516.2"/>
</dbReference>
<dbReference type="SMR" id="Q9I6A8"/>
<dbReference type="FunCoup" id="Q9I6A8">
    <property type="interactions" value="679"/>
</dbReference>
<dbReference type="STRING" id="208964.PA0387"/>
<dbReference type="PaxDb" id="208964-PA0387"/>
<dbReference type="GeneID" id="878675"/>
<dbReference type="KEGG" id="pae:PA0387"/>
<dbReference type="PATRIC" id="fig|208964.12.peg.407"/>
<dbReference type="PseudoCAP" id="PA0387"/>
<dbReference type="HOGENOM" id="CLU_082080_0_3_6"/>
<dbReference type="InParanoid" id="Q9I6A8"/>
<dbReference type="OrthoDB" id="9807456at2"/>
<dbReference type="PhylomeDB" id="Q9I6A8"/>
<dbReference type="BioCyc" id="PAER208964:G1FZ6-391-MONOMER"/>
<dbReference type="Proteomes" id="UP000002438">
    <property type="component" value="Chromosome"/>
</dbReference>
<dbReference type="GO" id="GO:0005737">
    <property type="term" value="C:cytoplasm"/>
    <property type="evidence" value="ECO:0000318"/>
    <property type="project" value="GO_Central"/>
</dbReference>
<dbReference type="GO" id="GO:0005829">
    <property type="term" value="C:cytosol"/>
    <property type="evidence" value="ECO:0000318"/>
    <property type="project" value="GO_Central"/>
</dbReference>
<dbReference type="GO" id="GO:0035870">
    <property type="term" value="F:dITP diphosphatase activity"/>
    <property type="evidence" value="ECO:0007669"/>
    <property type="project" value="RHEA"/>
</dbReference>
<dbReference type="GO" id="GO:0036220">
    <property type="term" value="F:ITP diphosphatase activity"/>
    <property type="evidence" value="ECO:0007669"/>
    <property type="project" value="UniProtKB-EC"/>
</dbReference>
<dbReference type="GO" id="GO:0046872">
    <property type="term" value="F:metal ion binding"/>
    <property type="evidence" value="ECO:0007669"/>
    <property type="project" value="UniProtKB-KW"/>
</dbReference>
<dbReference type="GO" id="GO:0047429">
    <property type="term" value="F:nucleoside triphosphate diphosphatase activity"/>
    <property type="evidence" value="ECO:0000318"/>
    <property type="project" value="GO_Central"/>
</dbReference>
<dbReference type="GO" id="GO:0000166">
    <property type="term" value="F:nucleotide binding"/>
    <property type="evidence" value="ECO:0007669"/>
    <property type="project" value="UniProtKB-KW"/>
</dbReference>
<dbReference type="GO" id="GO:0017111">
    <property type="term" value="F:ribonucleoside triphosphate phosphatase activity"/>
    <property type="evidence" value="ECO:0007669"/>
    <property type="project" value="InterPro"/>
</dbReference>
<dbReference type="GO" id="GO:0036222">
    <property type="term" value="F:XTP diphosphatase activity"/>
    <property type="evidence" value="ECO:0007669"/>
    <property type="project" value="RHEA"/>
</dbReference>
<dbReference type="GO" id="GO:0009143">
    <property type="term" value="P:nucleoside triphosphate catabolic process"/>
    <property type="evidence" value="ECO:0000318"/>
    <property type="project" value="GO_Central"/>
</dbReference>
<dbReference type="GO" id="GO:0009117">
    <property type="term" value="P:nucleotide metabolic process"/>
    <property type="evidence" value="ECO:0007669"/>
    <property type="project" value="UniProtKB-KW"/>
</dbReference>
<dbReference type="GO" id="GO:0009146">
    <property type="term" value="P:purine nucleoside triphosphate catabolic process"/>
    <property type="evidence" value="ECO:0007669"/>
    <property type="project" value="UniProtKB-UniRule"/>
</dbReference>
<dbReference type="CDD" id="cd00515">
    <property type="entry name" value="HAM1"/>
    <property type="match status" value="1"/>
</dbReference>
<dbReference type="FunFam" id="3.90.950.10:FF:000001">
    <property type="entry name" value="dITP/XTP pyrophosphatase"/>
    <property type="match status" value="1"/>
</dbReference>
<dbReference type="Gene3D" id="3.90.950.10">
    <property type="match status" value="1"/>
</dbReference>
<dbReference type="HAMAP" id="MF_01405">
    <property type="entry name" value="Non_canon_purine_NTPase"/>
    <property type="match status" value="1"/>
</dbReference>
<dbReference type="InterPro" id="IPR020922">
    <property type="entry name" value="dITP/XTP_pyrophosphatase"/>
</dbReference>
<dbReference type="InterPro" id="IPR029001">
    <property type="entry name" value="ITPase-like_fam"/>
</dbReference>
<dbReference type="InterPro" id="IPR002637">
    <property type="entry name" value="RdgB/HAM1"/>
</dbReference>
<dbReference type="NCBIfam" id="TIGR00042">
    <property type="entry name" value="RdgB/HAM1 family non-canonical purine NTP pyrophosphatase"/>
    <property type="match status" value="1"/>
</dbReference>
<dbReference type="PANTHER" id="PTHR11067:SF9">
    <property type="entry name" value="INOSINE TRIPHOSPHATE PYROPHOSPHATASE"/>
    <property type="match status" value="1"/>
</dbReference>
<dbReference type="PANTHER" id="PTHR11067">
    <property type="entry name" value="INOSINE TRIPHOSPHATE PYROPHOSPHATASE/HAM1 PROTEIN"/>
    <property type="match status" value="1"/>
</dbReference>
<dbReference type="Pfam" id="PF01725">
    <property type="entry name" value="Ham1p_like"/>
    <property type="match status" value="1"/>
</dbReference>
<dbReference type="SUPFAM" id="SSF52972">
    <property type="entry name" value="ITPase-like"/>
    <property type="match status" value="1"/>
</dbReference>
<organism>
    <name type="scientific">Pseudomonas aeruginosa (strain ATCC 15692 / DSM 22644 / CIP 104116 / JCM 14847 / LMG 12228 / 1C / PRS 101 / PAO1)</name>
    <dbReference type="NCBI Taxonomy" id="208964"/>
    <lineage>
        <taxon>Bacteria</taxon>
        <taxon>Pseudomonadati</taxon>
        <taxon>Pseudomonadota</taxon>
        <taxon>Gammaproteobacteria</taxon>
        <taxon>Pseudomonadales</taxon>
        <taxon>Pseudomonadaceae</taxon>
        <taxon>Pseudomonas</taxon>
    </lineage>
</organism>
<accession>Q9I6A8</accession>
<sequence>MIKLEQLVLASHNAGKLKELQAMLGASVKVRSIGEFSQVEPEETGLSFVENAILKARNAARLSGLPALADDSGLAVDFLGGAPGIYSARYADGRGDAANNAKLLEAMKDVPDAERGAQFVSVLALVRHADDPLPILCEGIWEGRILREARGAHGFGYDPLFWVPERDCSSAELAPEEKNRLSHRARAMALLKQRLGL</sequence>
<gene>
    <name type="ordered locus">PA0387</name>
</gene>
<reference key="1">
    <citation type="journal article" date="2000" name="Nature">
        <title>Complete genome sequence of Pseudomonas aeruginosa PAO1, an opportunistic pathogen.</title>
        <authorList>
            <person name="Stover C.K."/>
            <person name="Pham X.-Q.T."/>
            <person name="Erwin A.L."/>
            <person name="Mizoguchi S.D."/>
            <person name="Warrener P."/>
            <person name="Hickey M.J."/>
            <person name="Brinkman F.S.L."/>
            <person name="Hufnagle W.O."/>
            <person name="Kowalik D.J."/>
            <person name="Lagrou M."/>
            <person name="Garber R.L."/>
            <person name="Goltry L."/>
            <person name="Tolentino E."/>
            <person name="Westbrock-Wadman S."/>
            <person name="Yuan Y."/>
            <person name="Brody L.L."/>
            <person name="Coulter S.N."/>
            <person name="Folger K.R."/>
            <person name="Kas A."/>
            <person name="Larbig K."/>
            <person name="Lim R.M."/>
            <person name="Smith K.A."/>
            <person name="Spencer D.H."/>
            <person name="Wong G.K.-S."/>
            <person name="Wu Z."/>
            <person name="Paulsen I.T."/>
            <person name="Reizer J."/>
            <person name="Saier M.H. Jr."/>
            <person name="Hancock R.E.W."/>
            <person name="Lory S."/>
            <person name="Olson M.V."/>
        </authorList>
    </citation>
    <scope>NUCLEOTIDE SEQUENCE [LARGE SCALE GENOMIC DNA]</scope>
    <source>
        <strain>ATCC 15692 / DSM 22644 / CIP 104116 / JCM 14847 / LMG 12228 / 1C / PRS 101 / PAO1</strain>
    </source>
</reference>
<comment type="function">
    <text evidence="1">Pyrophosphatase that catalyzes the hydrolysis of nucleoside triphosphates to their monophosphate derivatives, with a high preference for the non-canonical purine nucleotides XTP (xanthosine triphosphate), dITP (deoxyinosine triphosphate) and ITP. Seems to function as a house-cleaning enzyme that removes non-canonical purine nucleotides from the nucleotide pool, thus preventing their incorporation into DNA/RNA and avoiding chromosomal lesions.</text>
</comment>
<comment type="catalytic activity">
    <reaction evidence="1">
        <text>XTP + H2O = XMP + diphosphate + H(+)</text>
        <dbReference type="Rhea" id="RHEA:28610"/>
        <dbReference type="ChEBI" id="CHEBI:15377"/>
        <dbReference type="ChEBI" id="CHEBI:15378"/>
        <dbReference type="ChEBI" id="CHEBI:33019"/>
        <dbReference type="ChEBI" id="CHEBI:57464"/>
        <dbReference type="ChEBI" id="CHEBI:61314"/>
        <dbReference type="EC" id="3.6.1.66"/>
    </reaction>
</comment>
<comment type="catalytic activity">
    <reaction evidence="1">
        <text>dITP + H2O = dIMP + diphosphate + H(+)</text>
        <dbReference type="Rhea" id="RHEA:28342"/>
        <dbReference type="ChEBI" id="CHEBI:15377"/>
        <dbReference type="ChEBI" id="CHEBI:15378"/>
        <dbReference type="ChEBI" id="CHEBI:33019"/>
        <dbReference type="ChEBI" id="CHEBI:61194"/>
        <dbReference type="ChEBI" id="CHEBI:61382"/>
        <dbReference type="EC" id="3.6.1.66"/>
    </reaction>
</comment>
<comment type="catalytic activity">
    <reaction evidence="1">
        <text>ITP + H2O = IMP + diphosphate + H(+)</text>
        <dbReference type="Rhea" id="RHEA:29399"/>
        <dbReference type="ChEBI" id="CHEBI:15377"/>
        <dbReference type="ChEBI" id="CHEBI:15378"/>
        <dbReference type="ChEBI" id="CHEBI:33019"/>
        <dbReference type="ChEBI" id="CHEBI:58053"/>
        <dbReference type="ChEBI" id="CHEBI:61402"/>
        <dbReference type="EC" id="3.6.1.66"/>
    </reaction>
</comment>
<comment type="cofactor">
    <cofactor evidence="1">
        <name>Mg(2+)</name>
        <dbReference type="ChEBI" id="CHEBI:18420"/>
    </cofactor>
    <text evidence="1">Binds 1 Mg(2+) ion per subunit.</text>
</comment>
<comment type="subunit">
    <text evidence="1">Homodimer.</text>
</comment>
<comment type="similarity">
    <text evidence="1">Belongs to the HAM1 NTPase family.</text>
</comment>
<keyword id="KW-0378">Hydrolase</keyword>
<keyword id="KW-0460">Magnesium</keyword>
<keyword id="KW-0479">Metal-binding</keyword>
<keyword id="KW-0546">Nucleotide metabolism</keyword>
<keyword id="KW-0547">Nucleotide-binding</keyword>
<keyword id="KW-1185">Reference proteome</keyword>
<proteinExistence type="inferred from homology"/>
<evidence type="ECO:0000255" key="1">
    <source>
        <dbReference type="HAMAP-Rule" id="MF_01405"/>
    </source>
</evidence>
<feature type="chain" id="PRO_0000178213" description="dITP/XTP pyrophosphatase">
    <location>
        <begin position="1"/>
        <end position="197"/>
    </location>
</feature>
<feature type="active site" description="Proton acceptor" evidence="1">
    <location>
        <position position="71"/>
    </location>
</feature>
<feature type="binding site" evidence="1">
    <location>
        <begin position="11"/>
        <end position="16"/>
    </location>
    <ligand>
        <name>substrate</name>
    </ligand>
</feature>
<feature type="binding site" evidence="1">
    <location>
        <position position="42"/>
    </location>
    <ligand>
        <name>Mg(2+)</name>
        <dbReference type="ChEBI" id="CHEBI:18420"/>
    </ligand>
</feature>
<feature type="binding site" evidence="1">
    <location>
        <position position="71"/>
    </location>
    <ligand>
        <name>Mg(2+)</name>
        <dbReference type="ChEBI" id="CHEBI:18420"/>
    </ligand>
</feature>
<feature type="binding site" evidence="1">
    <location>
        <position position="72"/>
    </location>
    <ligand>
        <name>substrate</name>
    </ligand>
</feature>
<feature type="binding site" evidence="1">
    <location>
        <begin position="155"/>
        <end position="158"/>
    </location>
    <ligand>
        <name>substrate</name>
    </ligand>
</feature>
<feature type="binding site" evidence="1">
    <location>
        <position position="178"/>
    </location>
    <ligand>
        <name>substrate</name>
    </ligand>
</feature>
<feature type="binding site" evidence="1">
    <location>
        <begin position="183"/>
        <end position="184"/>
    </location>
    <ligand>
        <name>substrate</name>
    </ligand>
</feature>
<protein>
    <recommendedName>
        <fullName evidence="1">dITP/XTP pyrophosphatase</fullName>
        <ecNumber evidence="1">3.6.1.66</ecNumber>
    </recommendedName>
    <alternativeName>
        <fullName evidence="1">Non-canonical purine NTP pyrophosphatase</fullName>
    </alternativeName>
    <alternativeName>
        <fullName evidence="1">Non-standard purine NTP pyrophosphatase</fullName>
    </alternativeName>
    <alternativeName>
        <fullName evidence="1">Nucleoside-triphosphate diphosphatase</fullName>
    </alternativeName>
    <alternativeName>
        <fullName evidence="1">Nucleoside-triphosphate pyrophosphatase</fullName>
        <shortName evidence="1">NTPase</shortName>
    </alternativeName>
</protein>